<keyword id="KW-0227">DNA damage</keyword>
<keyword id="KW-0234">DNA repair</keyword>
<keyword id="KW-0238">DNA-binding</keyword>
<keyword id="KW-0326">Glycosidase</keyword>
<keyword id="KW-0378">Hydrolase</keyword>
<keyword id="KW-0456">Lyase</keyword>
<keyword id="KW-0479">Metal-binding</keyword>
<keyword id="KW-0511">Multifunctional enzyme</keyword>
<keyword id="KW-1185">Reference proteome</keyword>
<keyword id="KW-0862">Zinc</keyword>
<keyword id="KW-0863">Zinc-finger</keyword>
<dbReference type="EC" id="3.2.2.23" evidence="2"/>
<dbReference type="EC" id="4.2.99.18" evidence="2"/>
<dbReference type="EMBL" id="AE016877">
    <property type="protein sequence ID" value="AAP11493.1"/>
    <property type="molecule type" value="Genomic_DNA"/>
</dbReference>
<dbReference type="RefSeq" id="NP_834292.1">
    <property type="nucleotide sequence ID" value="NC_004722.1"/>
</dbReference>
<dbReference type="RefSeq" id="WP_001114478.1">
    <property type="nucleotide sequence ID" value="NZ_CP138336.1"/>
</dbReference>
<dbReference type="SMR" id="Q817G5"/>
<dbReference type="STRING" id="226900.BC_4586"/>
<dbReference type="KEGG" id="bce:BC4586"/>
<dbReference type="PATRIC" id="fig|226900.8.peg.4748"/>
<dbReference type="HOGENOM" id="CLU_038423_1_3_9"/>
<dbReference type="OrthoDB" id="9800855at2"/>
<dbReference type="Proteomes" id="UP000001417">
    <property type="component" value="Chromosome"/>
</dbReference>
<dbReference type="GO" id="GO:0034039">
    <property type="term" value="F:8-oxo-7,8-dihydroguanine DNA N-glycosylase activity"/>
    <property type="evidence" value="ECO:0000318"/>
    <property type="project" value="GO_Central"/>
</dbReference>
<dbReference type="GO" id="GO:0140078">
    <property type="term" value="F:class I DNA-(apurinic or apyrimidinic site) endonuclease activity"/>
    <property type="evidence" value="ECO:0007669"/>
    <property type="project" value="UniProtKB-EC"/>
</dbReference>
<dbReference type="GO" id="GO:0003684">
    <property type="term" value="F:damaged DNA binding"/>
    <property type="evidence" value="ECO:0007669"/>
    <property type="project" value="InterPro"/>
</dbReference>
<dbReference type="GO" id="GO:0003906">
    <property type="term" value="F:DNA-(apurinic or apyrimidinic site) endonuclease activity"/>
    <property type="evidence" value="ECO:0000318"/>
    <property type="project" value="GO_Central"/>
</dbReference>
<dbReference type="GO" id="GO:0008270">
    <property type="term" value="F:zinc ion binding"/>
    <property type="evidence" value="ECO:0007669"/>
    <property type="project" value="UniProtKB-UniRule"/>
</dbReference>
<dbReference type="GO" id="GO:0006284">
    <property type="term" value="P:base-excision repair"/>
    <property type="evidence" value="ECO:0000318"/>
    <property type="project" value="GO_Central"/>
</dbReference>
<dbReference type="CDD" id="cd08966">
    <property type="entry name" value="EcFpg-like_N"/>
    <property type="match status" value="1"/>
</dbReference>
<dbReference type="FunFam" id="1.10.8.50:FF:000003">
    <property type="entry name" value="Formamidopyrimidine-DNA glycosylase"/>
    <property type="match status" value="1"/>
</dbReference>
<dbReference type="FunFam" id="3.20.190.10:FF:000001">
    <property type="entry name" value="Formamidopyrimidine-DNA glycosylase"/>
    <property type="match status" value="1"/>
</dbReference>
<dbReference type="Gene3D" id="1.10.8.50">
    <property type="match status" value="1"/>
</dbReference>
<dbReference type="Gene3D" id="3.20.190.10">
    <property type="entry name" value="MutM-like, N-terminal"/>
    <property type="match status" value="1"/>
</dbReference>
<dbReference type="HAMAP" id="MF_00103">
    <property type="entry name" value="Fapy_DNA_glycosyl"/>
    <property type="match status" value="1"/>
</dbReference>
<dbReference type="InterPro" id="IPR015886">
    <property type="entry name" value="DNA_glyclase/AP_lyase_DNA-bd"/>
</dbReference>
<dbReference type="InterPro" id="IPR015887">
    <property type="entry name" value="DNA_glyclase_Znf_dom_DNA_BS"/>
</dbReference>
<dbReference type="InterPro" id="IPR020629">
    <property type="entry name" value="Formamido-pyr_DNA_Glyclase"/>
</dbReference>
<dbReference type="InterPro" id="IPR012319">
    <property type="entry name" value="FPG_cat"/>
</dbReference>
<dbReference type="InterPro" id="IPR035937">
    <property type="entry name" value="MutM-like_N-ter"/>
</dbReference>
<dbReference type="InterPro" id="IPR010979">
    <property type="entry name" value="Ribosomal_uS13-like_H2TH"/>
</dbReference>
<dbReference type="InterPro" id="IPR000214">
    <property type="entry name" value="Znf_DNA_glyclase/AP_lyase"/>
</dbReference>
<dbReference type="InterPro" id="IPR010663">
    <property type="entry name" value="Znf_FPG/IleRS"/>
</dbReference>
<dbReference type="NCBIfam" id="TIGR00577">
    <property type="entry name" value="fpg"/>
    <property type="match status" value="1"/>
</dbReference>
<dbReference type="NCBIfam" id="NF002211">
    <property type="entry name" value="PRK01103.1"/>
    <property type="match status" value="1"/>
</dbReference>
<dbReference type="PANTHER" id="PTHR22993">
    <property type="entry name" value="FORMAMIDOPYRIMIDINE-DNA GLYCOSYLASE"/>
    <property type="match status" value="1"/>
</dbReference>
<dbReference type="PANTHER" id="PTHR22993:SF9">
    <property type="entry name" value="FORMAMIDOPYRIMIDINE-DNA GLYCOSYLASE"/>
    <property type="match status" value="1"/>
</dbReference>
<dbReference type="Pfam" id="PF01149">
    <property type="entry name" value="Fapy_DNA_glyco"/>
    <property type="match status" value="1"/>
</dbReference>
<dbReference type="Pfam" id="PF06831">
    <property type="entry name" value="H2TH"/>
    <property type="match status" value="1"/>
</dbReference>
<dbReference type="Pfam" id="PF06827">
    <property type="entry name" value="zf-FPG_IleRS"/>
    <property type="match status" value="1"/>
</dbReference>
<dbReference type="SMART" id="SM00898">
    <property type="entry name" value="Fapy_DNA_glyco"/>
    <property type="match status" value="1"/>
</dbReference>
<dbReference type="SMART" id="SM01232">
    <property type="entry name" value="H2TH"/>
    <property type="match status" value="1"/>
</dbReference>
<dbReference type="SUPFAM" id="SSF57716">
    <property type="entry name" value="Glucocorticoid receptor-like (DNA-binding domain)"/>
    <property type="match status" value="1"/>
</dbReference>
<dbReference type="SUPFAM" id="SSF81624">
    <property type="entry name" value="N-terminal domain of MutM-like DNA repair proteins"/>
    <property type="match status" value="1"/>
</dbReference>
<dbReference type="SUPFAM" id="SSF46946">
    <property type="entry name" value="S13-like H2TH domain"/>
    <property type="match status" value="1"/>
</dbReference>
<dbReference type="PROSITE" id="PS51068">
    <property type="entry name" value="FPG_CAT"/>
    <property type="match status" value="1"/>
</dbReference>
<dbReference type="PROSITE" id="PS01242">
    <property type="entry name" value="ZF_FPG_1"/>
    <property type="match status" value="1"/>
</dbReference>
<dbReference type="PROSITE" id="PS51066">
    <property type="entry name" value="ZF_FPG_2"/>
    <property type="match status" value="1"/>
</dbReference>
<proteinExistence type="inferred from homology"/>
<protein>
    <recommendedName>
        <fullName evidence="2">Formamidopyrimidine-DNA glycosylase</fullName>
        <shortName evidence="2">Fapy-DNA glycosylase</shortName>
        <ecNumber evidence="2">3.2.2.23</ecNumber>
    </recommendedName>
    <alternativeName>
        <fullName evidence="2">DNA-(apurinic or apyrimidinic site) lyase MutM</fullName>
        <shortName evidence="2">AP lyase MutM</shortName>
        <ecNumber evidence="2">4.2.99.18</ecNumber>
    </alternativeName>
</protein>
<name>FPG_BACCR</name>
<organism>
    <name type="scientific">Bacillus cereus (strain ATCC 14579 / DSM 31 / CCUG 7414 / JCM 2152 / NBRC 15305 / NCIMB 9373 / NCTC 2599 / NRRL B-3711)</name>
    <dbReference type="NCBI Taxonomy" id="226900"/>
    <lineage>
        <taxon>Bacteria</taxon>
        <taxon>Bacillati</taxon>
        <taxon>Bacillota</taxon>
        <taxon>Bacilli</taxon>
        <taxon>Bacillales</taxon>
        <taxon>Bacillaceae</taxon>
        <taxon>Bacillus</taxon>
        <taxon>Bacillus cereus group</taxon>
    </lineage>
</organism>
<gene>
    <name evidence="2" type="primary">mutM</name>
    <name evidence="2" type="synonym">fpg</name>
    <name type="ordered locus">BC_4586</name>
</gene>
<comment type="function">
    <text evidence="2">Involved in base excision repair of DNA damaged by oxidation or by mutagenic agents. Acts as a DNA glycosylase that recognizes and removes damaged bases. Has a preference for oxidized purines, such as 7,8-dihydro-8-oxoguanine (8-oxoG). Has AP (apurinic/apyrimidinic) lyase activity and introduces nicks in the DNA strand. Cleaves the DNA backbone by beta-delta elimination to generate a single-strand break at the site of the removed base with both 3'- and 5'-phosphates.</text>
</comment>
<comment type="catalytic activity">
    <reaction evidence="2">
        <text>Hydrolysis of DNA containing ring-opened 7-methylguanine residues, releasing 2,6-diamino-4-hydroxy-5-(N-methyl)formamidopyrimidine.</text>
        <dbReference type="EC" id="3.2.2.23"/>
    </reaction>
</comment>
<comment type="catalytic activity">
    <reaction evidence="2">
        <text>2'-deoxyribonucleotide-(2'-deoxyribose 5'-phosphate)-2'-deoxyribonucleotide-DNA = a 3'-end 2'-deoxyribonucleotide-(2,3-dehydro-2,3-deoxyribose 5'-phosphate)-DNA + a 5'-end 5'-phospho-2'-deoxyribonucleoside-DNA + H(+)</text>
        <dbReference type="Rhea" id="RHEA:66592"/>
        <dbReference type="Rhea" id="RHEA-COMP:13180"/>
        <dbReference type="Rhea" id="RHEA-COMP:16897"/>
        <dbReference type="Rhea" id="RHEA-COMP:17067"/>
        <dbReference type="ChEBI" id="CHEBI:15378"/>
        <dbReference type="ChEBI" id="CHEBI:136412"/>
        <dbReference type="ChEBI" id="CHEBI:157695"/>
        <dbReference type="ChEBI" id="CHEBI:167181"/>
        <dbReference type="EC" id="4.2.99.18"/>
    </reaction>
</comment>
<comment type="cofactor">
    <cofactor evidence="2">
        <name>Zn(2+)</name>
        <dbReference type="ChEBI" id="CHEBI:29105"/>
    </cofactor>
    <text evidence="2">Binds 1 zinc ion per subunit.</text>
</comment>
<comment type="subunit">
    <text evidence="2">Monomer.</text>
</comment>
<comment type="similarity">
    <text evidence="2">Belongs to the FPG family.</text>
</comment>
<reference key="1">
    <citation type="journal article" date="2003" name="Nature">
        <title>Genome sequence of Bacillus cereus and comparative analysis with Bacillus anthracis.</title>
        <authorList>
            <person name="Ivanova N."/>
            <person name="Sorokin A."/>
            <person name="Anderson I."/>
            <person name="Galleron N."/>
            <person name="Candelon B."/>
            <person name="Kapatral V."/>
            <person name="Bhattacharyya A."/>
            <person name="Reznik G."/>
            <person name="Mikhailova N."/>
            <person name="Lapidus A."/>
            <person name="Chu L."/>
            <person name="Mazur M."/>
            <person name="Goltsman E."/>
            <person name="Larsen N."/>
            <person name="D'Souza M."/>
            <person name="Walunas T."/>
            <person name="Grechkin Y."/>
            <person name="Pusch G."/>
            <person name="Haselkorn R."/>
            <person name="Fonstein M."/>
            <person name="Ehrlich S.D."/>
            <person name="Overbeek R."/>
            <person name="Kyrpides N.C."/>
        </authorList>
    </citation>
    <scope>NUCLEOTIDE SEQUENCE [LARGE SCALE GENOMIC DNA]</scope>
    <source>
        <strain>ATCC 14579 / DSM 31 / CCUG 7414 / JCM 2152 / NBRC 15305 / NCIMB 9373 / NCTC 2599 / NRRL B-3711</strain>
    </source>
</reference>
<accession>Q817G5</accession>
<evidence type="ECO:0000250" key="1"/>
<evidence type="ECO:0000255" key="2">
    <source>
        <dbReference type="HAMAP-Rule" id="MF_00103"/>
    </source>
</evidence>
<sequence length="276" mass="31718">MPELPEVENVRRTLENLVTGKTIEDVIVTYPKIVKRPDDAEIFKEMLKGEKIENIKRRGKFLLLYVTNYVIVSHLRMEGKFLLHQEDEPIDKHTHVRFLFTDGTELHYKDVRKFGTMHLFKKGEEMNQMPLADLGPEPFDAEMTPQYLQERLQKTNRKIKVVLLDQRLLVGLGNIYVDEVLFRSQIHPEREASSLTVEEIERIYEATVTTLGEAVKRGGSTIRTYINSQGQIGSFQELLNVYGKKGEPCVTCGTILEKTVVGGRGTHYCPICQPRI</sequence>
<feature type="initiator methionine" description="Removed" evidence="1">
    <location>
        <position position="1"/>
    </location>
</feature>
<feature type="chain" id="PRO_0000170808" description="Formamidopyrimidine-DNA glycosylase">
    <location>
        <begin position="2"/>
        <end position="276"/>
    </location>
</feature>
<feature type="zinc finger region" description="FPG-type" evidence="2">
    <location>
        <begin position="240"/>
        <end position="274"/>
    </location>
</feature>
<feature type="active site" description="Schiff-base intermediate with DNA" evidence="2">
    <location>
        <position position="2"/>
    </location>
</feature>
<feature type="active site" description="Proton donor" evidence="2">
    <location>
        <position position="3"/>
    </location>
</feature>
<feature type="active site" description="Proton donor; for beta-elimination activity" evidence="2">
    <location>
        <position position="60"/>
    </location>
</feature>
<feature type="active site" description="Proton donor; for delta-elimination activity" evidence="2">
    <location>
        <position position="264"/>
    </location>
</feature>
<feature type="binding site" evidence="2">
    <location>
        <position position="93"/>
    </location>
    <ligand>
        <name>DNA</name>
        <dbReference type="ChEBI" id="CHEBI:16991"/>
    </ligand>
</feature>
<feature type="binding site" evidence="2">
    <location>
        <position position="112"/>
    </location>
    <ligand>
        <name>DNA</name>
        <dbReference type="ChEBI" id="CHEBI:16991"/>
    </ligand>
</feature>